<comment type="function">
    <text evidence="1">Aldehyde decarbonylase involved in the conversion of aldehydes to alkanes. Core component of a very-long-chain alkane synthesis complex.</text>
</comment>
<comment type="catalytic activity">
    <reaction evidence="1">
        <text>a long-chain fatty aldehyde + 2 NADPH + O2 + H(+) = a long-chain alkane + formate + 2 NADP(+) + H2O</text>
        <dbReference type="Rhea" id="RHEA:21440"/>
        <dbReference type="ChEBI" id="CHEBI:15377"/>
        <dbReference type="ChEBI" id="CHEBI:15378"/>
        <dbReference type="ChEBI" id="CHEBI:15379"/>
        <dbReference type="ChEBI" id="CHEBI:15740"/>
        <dbReference type="ChEBI" id="CHEBI:17176"/>
        <dbReference type="ChEBI" id="CHEBI:57783"/>
        <dbReference type="ChEBI" id="CHEBI:58349"/>
        <dbReference type="ChEBI" id="CHEBI:83563"/>
        <dbReference type="EC" id="4.1.99.5"/>
    </reaction>
</comment>
<comment type="subunit">
    <text evidence="1">Homodimer.</text>
</comment>
<comment type="subcellular location">
    <subcellularLocation>
        <location evidence="1">Endoplasmic reticulum membrane</location>
        <topology evidence="1">Multi-pass membrane protein</topology>
    </subcellularLocation>
</comment>
<comment type="tissue specificity">
    <text evidence="3">Expressed ubiquitously.</text>
</comment>
<comment type="similarity">
    <text evidence="5">Belongs to the sterol desaturase family.</text>
</comment>
<reference key="1">
    <citation type="journal article" date="2003" name="Science">
        <title>In-depth view of structure, activity, and evolution of rice chromosome 10.</title>
        <authorList>
            <person name="Yu Y."/>
            <person name="Rambo T."/>
            <person name="Currie J."/>
            <person name="Saski C."/>
            <person name="Kim H.-R."/>
            <person name="Collura K."/>
            <person name="Thompson S."/>
            <person name="Simmons J."/>
            <person name="Yang T.-J."/>
            <person name="Nah G."/>
            <person name="Patel A.J."/>
            <person name="Thurmond S."/>
            <person name="Henry D."/>
            <person name="Oates R."/>
            <person name="Palmer M."/>
            <person name="Pries G."/>
            <person name="Gibson J."/>
            <person name="Anderson H."/>
            <person name="Paradkar M."/>
            <person name="Crane L."/>
            <person name="Dale J."/>
            <person name="Carver M.B."/>
            <person name="Wood T."/>
            <person name="Frisch D."/>
            <person name="Engler F."/>
            <person name="Soderlund C."/>
            <person name="Palmer L.E."/>
            <person name="Teytelman L."/>
            <person name="Nascimento L."/>
            <person name="De la Bastide M."/>
            <person name="Spiegel L."/>
            <person name="Ware D."/>
            <person name="O'Shaughnessy A."/>
            <person name="Dike S."/>
            <person name="Dedhia N."/>
            <person name="Preston R."/>
            <person name="Huang E."/>
            <person name="Ferraro K."/>
            <person name="Kuit K."/>
            <person name="Miller B."/>
            <person name="Zutavern T."/>
            <person name="Katzenberger F."/>
            <person name="Muller S."/>
            <person name="Balija V."/>
            <person name="Martienssen R.A."/>
            <person name="Stein L."/>
            <person name="Minx P."/>
            <person name="Johnson D."/>
            <person name="Cordum H."/>
            <person name="Mardis E."/>
            <person name="Cheng Z."/>
            <person name="Jiang J."/>
            <person name="Wilson R."/>
            <person name="McCombie W.R."/>
            <person name="Wing R.A."/>
            <person name="Yuan Q."/>
            <person name="Ouyang S."/>
            <person name="Liu J."/>
            <person name="Jones K.M."/>
            <person name="Gansberger K."/>
            <person name="Moffat K."/>
            <person name="Hill J."/>
            <person name="Tsitrin T."/>
            <person name="Overton L."/>
            <person name="Bera J."/>
            <person name="Kim M."/>
            <person name="Jin S."/>
            <person name="Tallon L."/>
            <person name="Ciecko A."/>
            <person name="Pai G."/>
            <person name="Van Aken S."/>
            <person name="Utterback T."/>
            <person name="Reidmuller S."/>
            <person name="Bormann J."/>
            <person name="Feldblyum T."/>
            <person name="Hsiao J."/>
            <person name="Zismann V."/>
            <person name="Blunt S."/>
            <person name="de Vazeille A.R."/>
            <person name="Shaffer T."/>
            <person name="Koo H."/>
            <person name="Suh B."/>
            <person name="Yang Q."/>
            <person name="Haas B."/>
            <person name="Peterson J."/>
            <person name="Pertea M."/>
            <person name="Volfovsky N."/>
            <person name="Wortman J."/>
            <person name="White O."/>
            <person name="Salzberg S.L."/>
            <person name="Fraser C.M."/>
            <person name="Buell C.R."/>
            <person name="Messing J."/>
            <person name="Song R."/>
            <person name="Fuks G."/>
            <person name="Llaca V."/>
            <person name="Kovchak S."/>
            <person name="Young S."/>
            <person name="Bowers J.E."/>
            <person name="Paterson A.H."/>
            <person name="Johns M.A."/>
            <person name="Mao L."/>
            <person name="Pan H."/>
            <person name="Dean R.A."/>
        </authorList>
    </citation>
    <scope>NUCLEOTIDE SEQUENCE [LARGE SCALE GENOMIC DNA]</scope>
    <source>
        <strain>cv. Nipponbare</strain>
    </source>
</reference>
<reference key="2">
    <citation type="journal article" date="2005" name="Nature">
        <title>The map-based sequence of the rice genome.</title>
        <authorList>
            <consortium name="International rice genome sequencing project (IRGSP)"/>
        </authorList>
    </citation>
    <scope>NUCLEOTIDE SEQUENCE [LARGE SCALE GENOMIC DNA]</scope>
    <source>
        <strain>cv. Nipponbare</strain>
    </source>
</reference>
<reference key="3">
    <citation type="journal article" date="2008" name="Nucleic Acids Res.">
        <title>The rice annotation project database (RAP-DB): 2008 update.</title>
        <authorList>
            <consortium name="The rice annotation project (RAP)"/>
        </authorList>
    </citation>
    <scope>GENOME REANNOTATION</scope>
    <source>
        <strain>cv. Nipponbare</strain>
    </source>
</reference>
<reference key="4">
    <citation type="journal article" date="2013" name="Rice">
        <title>Improvement of the Oryza sativa Nipponbare reference genome using next generation sequence and optical map data.</title>
        <authorList>
            <person name="Kawahara Y."/>
            <person name="de la Bastide M."/>
            <person name="Hamilton J.P."/>
            <person name="Kanamori H."/>
            <person name="McCombie W.R."/>
            <person name="Ouyang S."/>
            <person name="Schwartz D.C."/>
            <person name="Tanaka T."/>
            <person name="Wu J."/>
            <person name="Zhou S."/>
            <person name="Childs K.L."/>
            <person name="Davidson R.M."/>
            <person name="Lin H."/>
            <person name="Quesada-Ocampo L."/>
            <person name="Vaillancourt B."/>
            <person name="Sakai H."/>
            <person name="Lee S.S."/>
            <person name="Kim J."/>
            <person name="Numa H."/>
            <person name="Itoh T."/>
            <person name="Buell C.R."/>
            <person name="Matsumoto T."/>
        </authorList>
    </citation>
    <scope>GENOME REANNOTATION</scope>
    <source>
        <strain>cv. Nipponbare</strain>
    </source>
</reference>
<reference key="5">
    <citation type="journal article" date="2003" name="Science">
        <title>Collection, mapping, and annotation of over 28,000 cDNA clones from japonica rice.</title>
        <authorList>
            <consortium name="The rice full-length cDNA consortium"/>
        </authorList>
    </citation>
    <scope>NUCLEOTIDE SEQUENCE [LARGE SCALE MRNA]</scope>
    <source>
        <strain>cv. Nipponbare</strain>
    </source>
</reference>
<reference key="6">
    <citation type="journal article" date="2009" name="Plant Mol. Biol.">
        <title>Characterization of Glossy1-homologous genes in rice involved in leaf wax accumulation and drought resistance.</title>
        <authorList>
            <person name="Islam M.A."/>
            <person name="Du H."/>
            <person name="Ning J."/>
            <person name="Ye H."/>
            <person name="Xiong L."/>
        </authorList>
    </citation>
    <scope>TISSUE SPECIFICITY</scope>
    <scope>GENE FAMILY</scope>
    <scope>NOMENCLATURE</scope>
</reference>
<proteinExistence type="evidence at transcript level"/>
<feature type="chain" id="PRO_0000445884" description="Very-long-chain aldehyde decarbonylase GL1-10">
    <location>
        <begin position="1"/>
        <end position="301"/>
    </location>
</feature>
<feature type="transmembrane region" description="Helical" evidence="2">
    <location>
        <begin position="36"/>
        <end position="56"/>
    </location>
</feature>
<feature type="transmembrane region" description="Helical" evidence="2">
    <location>
        <begin position="94"/>
        <end position="114"/>
    </location>
</feature>
<feature type="transmembrane region" description="Helical" evidence="2">
    <location>
        <begin position="187"/>
        <end position="207"/>
    </location>
</feature>
<feature type="domain" description="Fatty acid hydroxylase" evidence="2">
    <location>
        <begin position="131"/>
        <end position="265"/>
    </location>
</feature>
<organism>
    <name type="scientific">Oryza sativa subsp. japonica</name>
    <name type="common">Rice</name>
    <dbReference type="NCBI Taxonomy" id="39947"/>
    <lineage>
        <taxon>Eukaryota</taxon>
        <taxon>Viridiplantae</taxon>
        <taxon>Streptophyta</taxon>
        <taxon>Embryophyta</taxon>
        <taxon>Tracheophyta</taxon>
        <taxon>Spermatophyta</taxon>
        <taxon>Magnoliopsida</taxon>
        <taxon>Liliopsida</taxon>
        <taxon>Poales</taxon>
        <taxon>Poaceae</taxon>
        <taxon>BOP clade</taxon>
        <taxon>Oryzoideae</taxon>
        <taxon>Oryzeae</taxon>
        <taxon>Oryzinae</taxon>
        <taxon>Oryza</taxon>
        <taxon>Oryza sativa</taxon>
    </lineage>
</organism>
<sequence>MLPYATAAEAEAALGRAMTAAESLWFRYSAGIPDYVLFWHNILFLFVVFTLAPLPVALLELRAPAAVGPFKLQPKVRLSREEFFRCYRDVMRLFFLVIGPLQLVSYPTVKMVGIHTGLPLPSLGEMAAQLLVYFLVEDYLNYWIHRLLHGEWGYEKIHRVHHEFTAPIGFAAPYAHWAEVLILGIPSFVGPALAPGHMITFWLWIVLRQMEAIETHSGFDFPFNLTKYIPFYGGAEYHDYHHYVGRQSQSNFASVFTYCDYLYGTDKGYRYHKAYQAKMKALGQTEGEKADSNGLSYAKLD</sequence>
<dbReference type="EC" id="4.1.99.5" evidence="1"/>
<dbReference type="EMBL" id="AC025783">
    <property type="protein sequence ID" value="AAK20047.1"/>
    <property type="molecule type" value="Genomic_DNA"/>
</dbReference>
<dbReference type="EMBL" id="DP000086">
    <property type="protein sequence ID" value="AAP54879.1"/>
    <property type="molecule type" value="Genomic_DNA"/>
</dbReference>
<dbReference type="EMBL" id="AP008216">
    <property type="protein sequence ID" value="BAF27120.1"/>
    <property type="molecule type" value="Genomic_DNA"/>
</dbReference>
<dbReference type="EMBL" id="AP014966">
    <property type="protein sequence ID" value="BAT11897.1"/>
    <property type="molecule type" value="Genomic_DNA"/>
</dbReference>
<dbReference type="EMBL" id="AK098884">
    <property type="protein sequence ID" value="BAG93792.1"/>
    <property type="molecule type" value="mRNA"/>
</dbReference>
<dbReference type="EMBL" id="AK121804">
    <property type="protein sequence ID" value="BAH00667.1"/>
    <property type="molecule type" value="mRNA"/>
</dbReference>
<dbReference type="FunCoup" id="Q9AV39">
    <property type="interactions" value="96"/>
</dbReference>
<dbReference type="STRING" id="39947.Q9AV39"/>
<dbReference type="PaxDb" id="39947-Q9AV39"/>
<dbReference type="EnsemblPlants" id="Os10t0545200-01">
    <property type="protein sequence ID" value="Os10t0545200-01"/>
    <property type="gene ID" value="Os10g0545200"/>
</dbReference>
<dbReference type="EnsemblPlants" id="Os10t0545200-02">
    <property type="protein sequence ID" value="Os10t0545200-02"/>
    <property type="gene ID" value="Os10g0545200"/>
</dbReference>
<dbReference type="Gramene" id="Os10t0545200-01">
    <property type="protein sequence ID" value="Os10t0545200-01"/>
    <property type="gene ID" value="Os10g0545200"/>
</dbReference>
<dbReference type="Gramene" id="Os10t0545200-02">
    <property type="protein sequence ID" value="Os10t0545200-02"/>
    <property type="gene ID" value="Os10g0545200"/>
</dbReference>
<dbReference type="KEGG" id="dosa:Os10g0545200"/>
<dbReference type="KEGG" id="osa:4349278"/>
<dbReference type="eggNOG" id="KOG0873">
    <property type="taxonomic scope" value="Eukaryota"/>
</dbReference>
<dbReference type="HOGENOM" id="CLU_047036_5_3_1"/>
<dbReference type="InParanoid" id="Q9AV39"/>
<dbReference type="OMA" id="VPWLYKT"/>
<dbReference type="OrthoDB" id="1658724at2759"/>
<dbReference type="Proteomes" id="UP000000763">
    <property type="component" value="Chromosome 10"/>
</dbReference>
<dbReference type="Proteomes" id="UP000059680">
    <property type="component" value="Chromosome 10"/>
</dbReference>
<dbReference type="GO" id="GO:0005789">
    <property type="term" value="C:endoplasmic reticulum membrane"/>
    <property type="evidence" value="ECO:0000318"/>
    <property type="project" value="GO_Central"/>
</dbReference>
<dbReference type="GO" id="GO:0071771">
    <property type="term" value="F:aldehyde oxygenase (deformylating) activity"/>
    <property type="evidence" value="ECO:0007669"/>
    <property type="project" value="UniProtKB-EC"/>
</dbReference>
<dbReference type="GO" id="GO:0000254">
    <property type="term" value="F:C-4 methylsterol oxidase activity"/>
    <property type="evidence" value="ECO:0000318"/>
    <property type="project" value="GO_Central"/>
</dbReference>
<dbReference type="GO" id="GO:0005506">
    <property type="term" value="F:iron ion binding"/>
    <property type="evidence" value="ECO:0007669"/>
    <property type="project" value="InterPro"/>
</dbReference>
<dbReference type="GO" id="GO:0016126">
    <property type="term" value="P:sterol biosynthetic process"/>
    <property type="evidence" value="ECO:0000318"/>
    <property type="project" value="GO_Central"/>
</dbReference>
<dbReference type="InterPro" id="IPR006694">
    <property type="entry name" value="Fatty_acid_hydroxylase"/>
</dbReference>
<dbReference type="InterPro" id="IPR050307">
    <property type="entry name" value="Sterol_Desaturase_Related"/>
</dbReference>
<dbReference type="PANTHER" id="PTHR11863">
    <property type="entry name" value="STEROL DESATURASE"/>
    <property type="match status" value="1"/>
</dbReference>
<dbReference type="Pfam" id="PF04116">
    <property type="entry name" value="FA_hydroxylase"/>
    <property type="match status" value="1"/>
</dbReference>
<gene>
    <name evidence="4" type="primary">GL1-10</name>
    <name evidence="7" type="ordered locus">LOC_Os10g39810</name>
    <name evidence="8" type="ordered locus">Os10g0545200</name>
    <name evidence="6" type="ORF">OSJNBa0001O14.3</name>
    <name evidence="9" type="ORF">OSNPB_100545200</name>
</gene>
<protein>
    <recommendedName>
        <fullName evidence="5">Very-long-chain aldehyde decarbonylase GL1-10</fullName>
        <ecNumber evidence="1">4.1.99.5</ecNumber>
    </recommendedName>
    <alternativeName>
        <fullName evidence="4">Protein GLOSSY 1-10</fullName>
    </alternativeName>
</protein>
<accession>Q9AV39</accession>
<accession>Q7XCJ4</accession>
<keyword id="KW-0256">Endoplasmic reticulum</keyword>
<keyword id="KW-0456">Lyase</keyword>
<keyword id="KW-0472">Membrane</keyword>
<keyword id="KW-0521">NADP</keyword>
<keyword id="KW-1185">Reference proteome</keyword>
<keyword id="KW-0812">Transmembrane</keyword>
<keyword id="KW-1133">Transmembrane helix</keyword>
<evidence type="ECO:0000250" key="1">
    <source>
        <dbReference type="UniProtKB" id="F4HVY0"/>
    </source>
</evidence>
<evidence type="ECO:0000255" key="2"/>
<evidence type="ECO:0000269" key="3">
    <source>
    </source>
</evidence>
<evidence type="ECO:0000303" key="4">
    <source>
    </source>
</evidence>
<evidence type="ECO:0000305" key="5"/>
<evidence type="ECO:0000312" key="6">
    <source>
        <dbReference type="EMBL" id="AAK20047.1"/>
    </source>
</evidence>
<evidence type="ECO:0000312" key="7">
    <source>
        <dbReference type="EMBL" id="AAP54879.1"/>
    </source>
</evidence>
<evidence type="ECO:0000312" key="8">
    <source>
        <dbReference type="EMBL" id="BAF27120.1"/>
    </source>
</evidence>
<evidence type="ECO:0000312" key="9">
    <source>
        <dbReference type="EMBL" id="BAT11897.1"/>
    </source>
</evidence>
<name>GLO1A_ORYSJ</name>